<gene>
    <name evidence="1" type="primary">cbpM</name>
    <name type="ordered locus">SSON_1007</name>
</gene>
<feature type="chain" id="PRO_0000286896" description="Chaperone modulatory protein CbpM">
    <location>
        <begin position="1"/>
        <end position="101"/>
    </location>
</feature>
<proteinExistence type="inferred from homology"/>
<keyword id="KW-1185">Reference proteome</keyword>
<name>CBPM_SHISS</name>
<comment type="function">
    <text evidence="1">Interacts with CbpA and inhibits both the DnaJ-like co-chaperone activity and the DNA binding activity of CbpA. Together with CbpA, modulates the activity of the DnaK chaperone system. Does not inhibit the co-chaperone activity of DnaJ.</text>
</comment>
<comment type="similarity">
    <text evidence="1">Belongs to the CbpM family.</text>
</comment>
<dbReference type="EMBL" id="CP000038">
    <property type="protein sequence ID" value="AAZ87738.1"/>
    <property type="molecule type" value="Genomic_DNA"/>
</dbReference>
<dbReference type="RefSeq" id="WP_000024560.1">
    <property type="nucleotide sequence ID" value="NC_007384.1"/>
</dbReference>
<dbReference type="SMR" id="Q3Z3C4"/>
<dbReference type="GeneID" id="93776412"/>
<dbReference type="KEGG" id="ssn:SSON_1007"/>
<dbReference type="HOGENOM" id="CLU_144710_3_1_6"/>
<dbReference type="Proteomes" id="UP000002529">
    <property type="component" value="Chromosome"/>
</dbReference>
<dbReference type="FunFam" id="1.10.1660.10:FF:000006">
    <property type="entry name" value="Chaperone modulatory protein CbpM"/>
    <property type="match status" value="1"/>
</dbReference>
<dbReference type="Gene3D" id="1.10.1660.10">
    <property type="match status" value="1"/>
</dbReference>
<dbReference type="HAMAP" id="MF_01155">
    <property type="entry name" value="CbpM"/>
    <property type="match status" value="1"/>
</dbReference>
<dbReference type="InterPro" id="IPR022835">
    <property type="entry name" value="CbpM"/>
</dbReference>
<dbReference type="NCBIfam" id="NF007617">
    <property type="entry name" value="PRK10265.1"/>
    <property type="match status" value="1"/>
</dbReference>
<dbReference type="Pfam" id="PF13591">
    <property type="entry name" value="MerR_2"/>
    <property type="match status" value="1"/>
</dbReference>
<protein>
    <recommendedName>
        <fullName evidence="1">Chaperone modulatory protein CbpM</fullName>
    </recommendedName>
</protein>
<evidence type="ECO:0000255" key="1">
    <source>
        <dbReference type="HAMAP-Rule" id="MF_01155"/>
    </source>
</evidence>
<sequence length="101" mass="11512">MANVTVTFTITEFCLHTGISEEELNEIVGLGVVEPREIQETTWVFDDHAAIVVQRAVRLRHELALDWPGIAVALTLMDDIAHLKQENRLLRQRLSRFVAHP</sequence>
<accession>Q3Z3C4</accession>
<reference key="1">
    <citation type="journal article" date="2005" name="Nucleic Acids Res.">
        <title>Genome dynamics and diversity of Shigella species, the etiologic agents of bacillary dysentery.</title>
        <authorList>
            <person name="Yang F."/>
            <person name="Yang J."/>
            <person name="Zhang X."/>
            <person name="Chen L."/>
            <person name="Jiang Y."/>
            <person name="Yan Y."/>
            <person name="Tang X."/>
            <person name="Wang J."/>
            <person name="Xiong Z."/>
            <person name="Dong J."/>
            <person name="Xue Y."/>
            <person name="Zhu Y."/>
            <person name="Xu X."/>
            <person name="Sun L."/>
            <person name="Chen S."/>
            <person name="Nie H."/>
            <person name="Peng J."/>
            <person name="Xu J."/>
            <person name="Wang Y."/>
            <person name="Yuan Z."/>
            <person name="Wen Y."/>
            <person name="Yao Z."/>
            <person name="Shen Y."/>
            <person name="Qiang B."/>
            <person name="Hou Y."/>
            <person name="Yu J."/>
            <person name="Jin Q."/>
        </authorList>
    </citation>
    <scope>NUCLEOTIDE SEQUENCE [LARGE SCALE GENOMIC DNA]</scope>
    <source>
        <strain>Ss046</strain>
    </source>
</reference>
<organism>
    <name type="scientific">Shigella sonnei (strain Ss046)</name>
    <dbReference type="NCBI Taxonomy" id="300269"/>
    <lineage>
        <taxon>Bacteria</taxon>
        <taxon>Pseudomonadati</taxon>
        <taxon>Pseudomonadota</taxon>
        <taxon>Gammaproteobacteria</taxon>
        <taxon>Enterobacterales</taxon>
        <taxon>Enterobacteriaceae</taxon>
        <taxon>Shigella</taxon>
    </lineage>
</organism>